<organism>
    <name type="scientific">Arabidopsis thaliana</name>
    <name type="common">Mouse-ear cress</name>
    <dbReference type="NCBI Taxonomy" id="3702"/>
    <lineage>
        <taxon>Eukaryota</taxon>
        <taxon>Viridiplantae</taxon>
        <taxon>Streptophyta</taxon>
        <taxon>Embryophyta</taxon>
        <taxon>Tracheophyta</taxon>
        <taxon>Spermatophyta</taxon>
        <taxon>Magnoliopsida</taxon>
        <taxon>eudicotyledons</taxon>
        <taxon>Gunneridae</taxon>
        <taxon>Pentapetalae</taxon>
        <taxon>rosids</taxon>
        <taxon>malvids</taxon>
        <taxon>Brassicales</taxon>
        <taxon>Brassicaceae</taxon>
        <taxon>Camelineae</taxon>
        <taxon>Arabidopsis</taxon>
    </lineage>
</organism>
<proteinExistence type="evidence at transcript level"/>
<protein>
    <recommendedName>
        <fullName>Pentatricopeptide repeat-containing protein At1g64100</fullName>
    </recommendedName>
</protein>
<gene>
    <name type="ordered locus">At1g64100</name>
    <name type="ORF">F22C12.14</name>
</gene>
<evidence type="ECO:0000303" key="1">
    <source>
    </source>
</evidence>
<evidence type="ECO:0000305" key="2"/>
<keyword id="KW-0025">Alternative splicing</keyword>
<keyword id="KW-1185">Reference proteome</keyword>
<keyword id="KW-0677">Repeat</keyword>
<sequence length="666" mass="75019">MTLQSQSSHCLNVHSSMVRDIEKCEQKTKRDIEKKNTKSGGVRLNSRRLIHGRVAEKGTKSLPSLTQVTFEGEELKLKSGSHYFKSLDDAIDFFDYMVRSRPFYTAVDCNKVIGVFVRMNRPDVAISLYRKMEIRRIPLNIYSFNILIKCFCDCHKLSFSLSTFGKLTKLGFQPDVVTFNTLLHGLCLEDRISEALALFGYMVETGFLEAVALFDQMVEIGLTPVVITFNTLINGLCLEGRVLEAAALVNKMVGKGLHIDVVTYGTIVNGMCKMGDTKSALNLLSKMEETHIKPDVVIYSAIIDRLCKDGHHSDAQYLFSEMLEKGIAPNVFTYNCMIDGFCSFGRWSDAQRLLRDMIEREINPDVLTFNALISASVKEGKLFEAEKLCDEMLHRCIFPDTVTYNSMIYGFCKHNRFDDAKHMFDLMASPDVVTFNTIIDVYCRAKRVDEGMQLLREISRRGLVANTTTYNTLIHGFCEVDNLNAAQDLFQEMISHGVCPDTITCNILLYGFCENEKLEEALELFEVIQMSKIDLDTVAYNIIIHGMCKGSKVDEAWDLFCSLPIHGVEPDVQTYNVMISGFCGKSAISDANVLFHKMKDNGHEPDNSTYNTLIRGCLKAGEIDKSIELISEMRSNGFSGDAFTIKMVADLITDGRLDKSFSDMLS</sequence>
<comment type="alternative products">
    <event type="alternative splicing"/>
    <isoform>
        <id>Q9SH60-1</id>
        <name>1</name>
        <sequence type="displayed"/>
    </isoform>
    <isoform>
        <id>Q9SH60-2</id>
        <name>2</name>
        <sequence type="described" ref="VSP_034549"/>
    </isoform>
</comment>
<comment type="miscellaneous">
    <molecule>Isoform 2</molecule>
    <text evidence="2">May be due to intron retention.</text>
</comment>
<comment type="similarity">
    <text evidence="2">Belongs to the PPR family. P subfamily.</text>
</comment>
<comment type="sequence caution" evidence="2">
    <conflict type="erroneous gene model prediction">
        <sequence resource="EMBL-CDS" id="AAF24577"/>
    </conflict>
</comment>
<comment type="online information" name="Pentatricopeptide repeat proteins">
    <link uri="https://ppr.plantenergy.uwa.edu.au"/>
</comment>
<reference key="1">
    <citation type="journal article" date="2000" name="Nature">
        <title>Sequence and analysis of chromosome 1 of the plant Arabidopsis thaliana.</title>
        <authorList>
            <person name="Theologis A."/>
            <person name="Ecker J.R."/>
            <person name="Palm C.J."/>
            <person name="Federspiel N.A."/>
            <person name="Kaul S."/>
            <person name="White O."/>
            <person name="Alonso J."/>
            <person name="Altafi H."/>
            <person name="Araujo R."/>
            <person name="Bowman C.L."/>
            <person name="Brooks S.Y."/>
            <person name="Buehler E."/>
            <person name="Chan A."/>
            <person name="Chao Q."/>
            <person name="Chen H."/>
            <person name="Cheuk R.F."/>
            <person name="Chin C.W."/>
            <person name="Chung M.K."/>
            <person name="Conn L."/>
            <person name="Conway A.B."/>
            <person name="Conway A.R."/>
            <person name="Creasy T.H."/>
            <person name="Dewar K."/>
            <person name="Dunn P."/>
            <person name="Etgu P."/>
            <person name="Feldblyum T.V."/>
            <person name="Feng J.-D."/>
            <person name="Fong B."/>
            <person name="Fujii C.Y."/>
            <person name="Gill J.E."/>
            <person name="Goldsmith A.D."/>
            <person name="Haas B."/>
            <person name="Hansen N.F."/>
            <person name="Hughes B."/>
            <person name="Huizar L."/>
            <person name="Hunter J.L."/>
            <person name="Jenkins J."/>
            <person name="Johnson-Hopson C."/>
            <person name="Khan S."/>
            <person name="Khaykin E."/>
            <person name="Kim C.J."/>
            <person name="Koo H.L."/>
            <person name="Kremenetskaia I."/>
            <person name="Kurtz D.B."/>
            <person name="Kwan A."/>
            <person name="Lam B."/>
            <person name="Langin-Hooper S."/>
            <person name="Lee A."/>
            <person name="Lee J.M."/>
            <person name="Lenz C.A."/>
            <person name="Li J.H."/>
            <person name="Li Y.-P."/>
            <person name="Lin X."/>
            <person name="Liu S.X."/>
            <person name="Liu Z.A."/>
            <person name="Luros J.S."/>
            <person name="Maiti R."/>
            <person name="Marziali A."/>
            <person name="Militscher J."/>
            <person name="Miranda M."/>
            <person name="Nguyen M."/>
            <person name="Nierman W.C."/>
            <person name="Osborne B.I."/>
            <person name="Pai G."/>
            <person name="Peterson J."/>
            <person name="Pham P.K."/>
            <person name="Rizzo M."/>
            <person name="Rooney T."/>
            <person name="Rowley D."/>
            <person name="Sakano H."/>
            <person name="Salzberg S.L."/>
            <person name="Schwartz J.R."/>
            <person name="Shinn P."/>
            <person name="Southwick A.M."/>
            <person name="Sun H."/>
            <person name="Tallon L.J."/>
            <person name="Tambunga G."/>
            <person name="Toriumi M.J."/>
            <person name="Town C.D."/>
            <person name="Utterback T."/>
            <person name="Van Aken S."/>
            <person name="Vaysberg M."/>
            <person name="Vysotskaia V.S."/>
            <person name="Walker M."/>
            <person name="Wu D."/>
            <person name="Yu G."/>
            <person name="Fraser C.M."/>
            <person name="Venter J.C."/>
            <person name="Davis R.W."/>
        </authorList>
    </citation>
    <scope>NUCLEOTIDE SEQUENCE [LARGE SCALE GENOMIC DNA]</scope>
    <source>
        <strain>cv. Columbia</strain>
    </source>
</reference>
<reference key="2">
    <citation type="journal article" date="2017" name="Plant J.">
        <title>Araport11: a complete reannotation of the Arabidopsis thaliana reference genome.</title>
        <authorList>
            <person name="Cheng C.Y."/>
            <person name="Krishnakumar V."/>
            <person name="Chan A.P."/>
            <person name="Thibaud-Nissen F."/>
            <person name="Schobel S."/>
            <person name="Town C.D."/>
        </authorList>
    </citation>
    <scope>GENOME REANNOTATION</scope>
    <source>
        <strain>cv. Columbia</strain>
    </source>
</reference>
<reference key="3">
    <citation type="journal article" date="2006" name="Plant Biotechnol. J.">
        <title>Simultaneous high-throughput recombinational cloning of open reading frames in closed and open configurations.</title>
        <authorList>
            <person name="Underwood B.A."/>
            <person name="Vanderhaeghen R."/>
            <person name="Whitford R."/>
            <person name="Town C.D."/>
            <person name="Hilson P."/>
        </authorList>
    </citation>
    <scope>NUCLEOTIDE SEQUENCE [LARGE SCALE MRNA] (ISOFORM 2)</scope>
    <source>
        <strain>cv. Columbia</strain>
    </source>
</reference>
<reference key="4">
    <citation type="journal article" date="2004" name="Plant Cell">
        <title>Genome-wide analysis of Arabidopsis pentatricopeptide repeat proteins reveals their essential role in organelle biogenesis.</title>
        <authorList>
            <person name="Lurin C."/>
            <person name="Andres C."/>
            <person name="Aubourg S."/>
            <person name="Bellaoui M."/>
            <person name="Bitton F."/>
            <person name="Bruyere C."/>
            <person name="Caboche M."/>
            <person name="Debast C."/>
            <person name="Gualberto J."/>
            <person name="Hoffmann B."/>
            <person name="Lecharny A."/>
            <person name="Le Ret M."/>
            <person name="Martin-Magniette M.-L."/>
            <person name="Mireau H."/>
            <person name="Peeters N."/>
            <person name="Renou J.-P."/>
            <person name="Szurek B."/>
            <person name="Taconnat L."/>
            <person name="Small I."/>
        </authorList>
    </citation>
    <scope>GENE FAMILY</scope>
</reference>
<name>PP103_ARATH</name>
<dbReference type="EMBL" id="AC007764">
    <property type="protein sequence ID" value="AAF24577.1"/>
    <property type="status" value="ALT_SEQ"/>
    <property type="molecule type" value="Genomic_DNA"/>
</dbReference>
<dbReference type="EMBL" id="CP002684">
    <property type="protein sequence ID" value="AEE34192.1"/>
    <property type="molecule type" value="Genomic_DNA"/>
</dbReference>
<dbReference type="EMBL" id="CP002684">
    <property type="protein sequence ID" value="ANM59148.1"/>
    <property type="molecule type" value="Genomic_DNA"/>
</dbReference>
<dbReference type="EMBL" id="DQ446393">
    <property type="protein sequence ID" value="ABE65739.1"/>
    <property type="molecule type" value="mRNA"/>
</dbReference>
<dbReference type="PIR" id="F96665">
    <property type="entry name" value="F96665"/>
</dbReference>
<dbReference type="RefSeq" id="NP_001319314.1">
    <molecule id="Q9SH60-1"/>
    <property type="nucleotide sequence ID" value="NM_001334145.1"/>
</dbReference>
<dbReference type="RefSeq" id="NP_564822.1">
    <molecule id="Q9SH60-1"/>
    <property type="nucleotide sequence ID" value="NM_105083.1"/>
</dbReference>
<dbReference type="SMR" id="Q9SH60"/>
<dbReference type="STRING" id="3702.Q9SH60"/>
<dbReference type="PaxDb" id="3702-AT1G64100.2"/>
<dbReference type="ProteomicsDB" id="249057">
    <molecule id="Q9SH60-1"/>
</dbReference>
<dbReference type="EnsemblPlants" id="AT1G64100.1">
    <molecule id="Q9SH60-1"/>
    <property type="protein sequence ID" value="AT1G64100.1"/>
    <property type="gene ID" value="AT1G64100"/>
</dbReference>
<dbReference type="EnsemblPlants" id="AT1G64100.3">
    <molecule id="Q9SH60-1"/>
    <property type="protein sequence ID" value="AT1G64100.3"/>
    <property type="gene ID" value="AT1G64100"/>
</dbReference>
<dbReference type="GeneID" id="842714"/>
<dbReference type="Gramene" id="AT1G64100.1">
    <molecule id="Q9SH60-1"/>
    <property type="protein sequence ID" value="AT1G64100.1"/>
    <property type="gene ID" value="AT1G64100"/>
</dbReference>
<dbReference type="Gramene" id="AT1G64100.3">
    <molecule id="Q9SH60-1"/>
    <property type="protein sequence ID" value="AT1G64100.3"/>
    <property type="gene ID" value="AT1G64100"/>
</dbReference>
<dbReference type="KEGG" id="ath:AT1G64100"/>
<dbReference type="Araport" id="AT1G64100"/>
<dbReference type="TAIR" id="AT1G64100"/>
<dbReference type="eggNOG" id="KOG4197">
    <property type="taxonomic scope" value="Eukaryota"/>
</dbReference>
<dbReference type="HOGENOM" id="CLU_002706_49_12_1"/>
<dbReference type="InParanoid" id="Q9SH60"/>
<dbReference type="OMA" id="ERMFYLM"/>
<dbReference type="PhylomeDB" id="Q9SH60"/>
<dbReference type="PRO" id="PR:Q9SH60"/>
<dbReference type="Proteomes" id="UP000006548">
    <property type="component" value="Chromosome 1"/>
</dbReference>
<dbReference type="ExpressionAtlas" id="Q9SH60">
    <property type="expression patterns" value="baseline and differential"/>
</dbReference>
<dbReference type="Gene3D" id="1.25.40.10">
    <property type="entry name" value="Tetratricopeptide repeat domain"/>
    <property type="match status" value="5"/>
</dbReference>
<dbReference type="InterPro" id="IPR002885">
    <property type="entry name" value="Pentatricopeptide_rpt"/>
</dbReference>
<dbReference type="InterPro" id="IPR011990">
    <property type="entry name" value="TPR-like_helical_dom_sf"/>
</dbReference>
<dbReference type="NCBIfam" id="TIGR00756">
    <property type="entry name" value="PPR"/>
    <property type="match status" value="13"/>
</dbReference>
<dbReference type="PANTHER" id="PTHR47932">
    <property type="entry name" value="ATPASE EXPRESSION PROTEIN 3"/>
    <property type="match status" value="1"/>
</dbReference>
<dbReference type="PANTHER" id="PTHR47932:SF63">
    <property type="entry name" value="OS08G0290000 PROTEIN"/>
    <property type="match status" value="1"/>
</dbReference>
<dbReference type="Pfam" id="PF12854">
    <property type="entry name" value="PPR_1"/>
    <property type="match status" value="2"/>
</dbReference>
<dbReference type="Pfam" id="PF13041">
    <property type="entry name" value="PPR_2"/>
    <property type="match status" value="7"/>
</dbReference>
<dbReference type="PROSITE" id="PS51375">
    <property type="entry name" value="PPR"/>
    <property type="match status" value="15"/>
</dbReference>
<feature type="chain" id="PRO_0000342844" description="Pentatricopeptide repeat-containing protein At1g64100">
    <location>
        <begin position="1"/>
        <end position="666"/>
    </location>
</feature>
<feature type="repeat" description="PPR 1">
    <location>
        <begin position="105"/>
        <end position="139"/>
    </location>
</feature>
<feature type="repeat" description="PPR 2">
    <location>
        <begin position="140"/>
        <end position="174"/>
    </location>
</feature>
<feature type="repeat" description="PPR 3">
    <location>
        <begin position="175"/>
        <end position="209"/>
    </location>
</feature>
<feature type="repeat" description="PPR 4">
    <location>
        <begin position="225"/>
        <end position="259"/>
    </location>
</feature>
<feature type="repeat" description="PPR 5">
    <location>
        <begin position="260"/>
        <end position="294"/>
    </location>
</feature>
<feature type="repeat" description="PPR 6">
    <location>
        <begin position="295"/>
        <end position="329"/>
    </location>
</feature>
<feature type="repeat" description="PPR 7">
    <location>
        <begin position="330"/>
        <end position="364"/>
    </location>
</feature>
<feature type="repeat" description="PPR 8">
    <location>
        <begin position="365"/>
        <end position="399"/>
    </location>
</feature>
<feature type="repeat" description="PPR 9">
    <location>
        <begin position="400"/>
        <end position="430"/>
    </location>
</feature>
<feature type="repeat" description="PPR 10">
    <location>
        <begin position="431"/>
        <end position="465"/>
    </location>
</feature>
<feature type="repeat" description="PPR 11">
    <location>
        <begin position="466"/>
        <end position="500"/>
    </location>
</feature>
<feature type="repeat" description="PPR 12">
    <location>
        <begin position="501"/>
        <end position="535"/>
    </location>
</feature>
<feature type="repeat" description="PPR 13">
    <location>
        <begin position="536"/>
        <end position="570"/>
    </location>
</feature>
<feature type="repeat" description="PPR 14">
    <location>
        <begin position="571"/>
        <end position="605"/>
    </location>
</feature>
<feature type="repeat" description="PPR 15">
    <location>
        <begin position="606"/>
        <end position="640"/>
    </location>
</feature>
<feature type="splice variant" id="VSP_034549" description="In isoform 2." evidence="1">
    <location>
        <begin position="1"/>
        <end position="216"/>
    </location>
</feature>
<accession>Q9SH60</accession>
<accession>Q1PFH0</accession>